<gene>
    <name evidence="1" type="primary">rpoB</name>
    <name type="ordered locus">VF_2414</name>
    <name type="ORF">VF2413</name>
</gene>
<evidence type="ECO:0000255" key="1">
    <source>
        <dbReference type="HAMAP-Rule" id="MF_01321"/>
    </source>
</evidence>
<comment type="function">
    <text evidence="1">DNA-dependent RNA polymerase catalyzes the transcription of DNA into RNA using the four ribonucleoside triphosphates as substrates.</text>
</comment>
<comment type="catalytic activity">
    <reaction evidence="1">
        <text>RNA(n) + a ribonucleoside 5'-triphosphate = RNA(n+1) + diphosphate</text>
        <dbReference type="Rhea" id="RHEA:21248"/>
        <dbReference type="Rhea" id="RHEA-COMP:14527"/>
        <dbReference type="Rhea" id="RHEA-COMP:17342"/>
        <dbReference type="ChEBI" id="CHEBI:33019"/>
        <dbReference type="ChEBI" id="CHEBI:61557"/>
        <dbReference type="ChEBI" id="CHEBI:140395"/>
        <dbReference type="EC" id="2.7.7.6"/>
    </reaction>
</comment>
<comment type="subunit">
    <text evidence="1">The RNAP catalytic core consists of 2 alpha, 1 beta, 1 beta' and 1 omega subunit. When a sigma factor is associated with the core the holoenzyme is formed, which can initiate transcription.</text>
</comment>
<comment type="similarity">
    <text evidence="1">Belongs to the RNA polymerase beta chain family.</text>
</comment>
<accession>Q5E238</accession>
<accession>Q5E237</accession>
<sequence>MVYSYTEKKRIRKDFGKRPQVLDIPYLLSIQLDSFTKFIEQDPEGQYGLEAAFRSVFPIQSYNGNSKLEYVSYNLREPEFDVKECQIRGVTYSAPLRVKLRLVVYDKDAPANTVKDIKEQEVYMGEIPLMTDNGTFVINGTERVIVSQLHRSPGVFFDSDKGKTHSSGKVLYNARVIPYRGSWLDFEFDPKDNLFVRIDRRRKLPATIILRALNKTTEEILDLFFDKVVFEVKDQTLMMELIPERLRGETATFDIEANGKVYVEAGRRITARHIRQLTKDDITHIEVPVDYIVGKVASHDYVNEDTGEIIIAANQEFSLEDLANLSQAGYKKIEVLFTNDLDHGAYISDTLRADSTVDRLSALVEIYRMMRPGEPPTKEAAEALFESLFFSEERYDLSTVGRMKFNSSIGRDNDEGAGVLDETDIIEVMRKLIDIRNGIGEVDDIDHLGNRRIRSVGEMAENQFRVGLVRVERAVRERLSLGDLDAIMPQDLINAKPISAAVKEFFGSSQLSQFMDQNNPLSEVTHKRRISALGPGGLTRERAGFEVRDVHATHYGRLCPIETPEGPNIGLINSLSAFAQCNEYGFLETPYRRVVDGQVTDQVDYLSAIEEGTFVIAQANAVLTEEGTFADELIIARQKGESGLHPREHIQYMDVATNQVVSVAASLIPFLEHDDANRALMGANMQRQAVPTLKADKPLVGTGIERNVAVDSGVTAVAKRGGVVQSVDASRIVIKVNEDELVPGEAGIDIYNLTKYTRSNQNTCINQRPTVLPGEPVTRGDVLADGPSTDLGELALGQNMRIAFMPWNGYNFEDSILVSERVVQEDRFTTIHIQELSCVARDTKLGSEEITADIPNVGEAALSKLDESGIVYIGAEVKGGDILVGKVTPKGETQLTPEEKLLRAIFGEKASDVKDSSLRVPNSVSGTIIDVQVFTRDGVEKDKRALEIEQMQLKEAKKDITEEFQILEGGLLARVRTLLVAAGVSEVKLDAMDRKQWLEITLDDEAQQNQLEQLAEQYDELKAEFDKKFETKRRKITQGDDLAPGVLKIVKVYLAVKRRIQPGDKMAGRHGNKGVISKINPVEDMPYDEKGQPVDIVLNPLGVPSRMNIGQILEVHMGLAAKGVGDKINQMLKEQQELHKFRNFLQKVYDLGETRQEVDIAALSDDEVRTLIKNLRGGLPIATPIFDGAPEASIKELLKLVDLPESGQLKLFDGRTGDAFERPVTVGYMYMLKLNHLVDDKMHARSTGSYSLVTQQPLGGKAQFGGQRFGEMEVWALEAYGAAYTLQEMLTVKSDDVNGRTKMYKNIVDGDHRMEPGMPESFNVLLKEIRSLGINIELEDEE</sequence>
<dbReference type="EC" id="2.7.7.6" evidence="1"/>
<dbReference type="EMBL" id="CP000020">
    <property type="protein sequence ID" value="AAW86909.2"/>
    <property type="molecule type" value="Genomic_DNA"/>
</dbReference>
<dbReference type="RefSeq" id="WP_011262791.1">
    <property type="nucleotide sequence ID" value="NC_006840.2"/>
</dbReference>
<dbReference type="RefSeq" id="YP_205797.2">
    <property type="nucleotide sequence ID" value="NC_006840.2"/>
</dbReference>
<dbReference type="SMR" id="Q5E238"/>
<dbReference type="STRING" id="312309.VF_2414"/>
<dbReference type="EnsemblBacteria" id="AAW86909">
    <property type="protein sequence ID" value="AAW86909"/>
    <property type="gene ID" value="VF_2414"/>
</dbReference>
<dbReference type="GeneID" id="54165129"/>
<dbReference type="KEGG" id="vfi:VF_2414"/>
<dbReference type="PATRIC" id="fig|312309.11.peg.2447"/>
<dbReference type="eggNOG" id="COG0085">
    <property type="taxonomic scope" value="Bacteria"/>
</dbReference>
<dbReference type="HOGENOM" id="CLU_000524_4_0_6"/>
<dbReference type="OrthoDB" id="9803954at2"/>
<dbReference type="Proteomes" id="UP000000537">
    <property type="component" value="Chromosome I"/>
</dbReference>
<dbReference type="GO" id="GO:0000428">
    <property type="term" value="C:DNA-directed RNA polymerase complex"/>
    <property type="evidence" value="ECO:0007669"/>
    <property type="project" value="UniProtKB-KW"/>
</dbReference>
<dbReference type="GO" id="GO:0003677">
    <property type="term" value="F:DNA binding"/>
    <property type="evidence" value="ECO:0007669"/>
    <property type="project" value="UniProtKB-UniRule"/>
</dbReference>
<dbReference type="GO" id="GO:0003899">
    <property type="term" value="F:DNA-directed RNA polymerase activity"/>
    <property type="evidence" value="ECO:0007669"/>
    <property type="project" value="UniProtKB-UniRule"/>
</dbReference>
<dbReference type="GO" id="GO:0032549">
    <property type="term" value="F:ribonucleoside binding"/>
    <property type="evidence" value="ECO:0007669"/>
    <property type="project" value="InterPro"/>
</dbReference>
<dbReference type="GO" id="GO:0006351">
    <property type="term" value="P:DNA-templated transcription"/>
    <property type="evidence" value="ECO:0007669"/>
    <property type="project" value="UniProtKB-UniRule"/>
</dbReference>
<dbReference type="CDD" id="cd00653">
    <property type="entry name" value="RNA_pol_B_RPB2"/>
    <property type="match status" value="1"/>
</dbReference>
<dbReference type="FunFam" id="2.40.270.10:FF:000003">
    <property type="entry name" value="DNA-directed RNA polymerase subunit beta"/>
    <property type="match status" value="1"/>
</dbReference>
<dbReference type="FunFam" id="2.40.270.10:FF:000004">
    <property type="entry name" value="DNA-directed RNA polymerase subunit beta"/>
    <property type="match status" value="1"/>
</dbReference>
<dbReference type="FunFam" id="2.40.50.100:FF:000006">
    <property type="entry name" value="DNA-directed RNA polymerase subunit beta"/>
    <property type="match status" value="1"/>
</dbReference>
<dbReference type="FunFam" id="2.40.50.150:FF:000001">
    <property type="entry name" value="DNA-directed RNA polymerase subunit beta"/>
    <property type="match status" value="1"/>
</dbReference>
<dbReference type="FunFam" id="3.90.1100.10:FF:000002">
    <property type="entry name" value="DNA-directed RNA polymerase subunit beta"/>
    <property type="match status" value="1"/>
</dbReference>
<dbReference type="FunFam" id="3.90.1110.10:FF:000001">
    <property type="entry name" value="DNA-directed RNA polymerase subunit beta"/>
    <property type="match status" value="1"/>
</dbReference>
<dbReference type="FunFam" id="3.90.1110.10:FF:000004">
    <property type="entry name" value="DNA-directed RNA polymerase subunit beta"/>
    <property type="match status" value="1"/>
</dbReference>
<dbReference type="FunFam" id="3.90.1800.10:FF:000001">
    <property type="entry name" value="DNA-directed RNA polymerase subunit beta"/>
    <property type="match status" value="1"/>
</dbReference>
<dbReference type="Gene3D" id="2.40.50.100">
    <property type="match status" value="1"/>
</dbReference>
<dbReference type="Gene3D" id="2.40.50.150">
    <property type="match status" value="1"/>
</dbReference>
<dbReference type="Gene3D" id="3.90.1100.10">
    <property type="match status" value="2"/>
</dbReference>
<dbReference type="Gene3D" id="6.10.140.1670">
    <property type="match status" value="1"/>
</dbReference>
<dbReference type="Gene3D" id="2.30.150.10">
    <property type="entry name" value="DNA-directed RNA polymerase, beta subunit, external 1 domain"/>
    <property type="match status" value="1"/>
</dbReference>
<dbReference type="Gene3D" id="2.40.270.10">
    <property type="entry name" value="DNA-directed RNA polymerase, subunit 2, domain 6"/>
    <property type="match status" value="1"/>
</dbReference>
<dbReference type="Gene3D" id="3.90.1800.10">
    <property type="entry name" value="RNA polymerase alpha subunit dimerisation domain"/>
    <property type="match status" value="1"/>
</dbReference>
<dbReference type="Gene3D" id="3.90.1110.10">
    <property type="entry name" value="RNA polymerase Rpb2, domain 2"/>
    <property type="match status" value="1"/>
</dbReference>
<dbReference type="HAMAP" id="MF_01321">
    <property type="entry name" value="RNApol_bact_RpoB"/>
    <property type="match status" value="1"/>
</dbReference>
<dbReference type="InterPro" id="IPR042107">
    <property type="entry name" value="DNA-dir_RNA_pol_bsu_ext_1_sf"/>
</dbReference>
<dbReference type="InterPro" id="IPR019462">
    <property type="entry name" value="DNA-dir_RNA_pol_bsu_external_1"/>
</dbReference>
<dbReference type="InterPro" id="IPR015712">
    <property type="entry name" value="DNA-dir_RNA_pol_su2"/>
</dbReference>
<dbReference type="InterPro" id="IPR007120">
    <property type="entry name" value="DNA-dir_RNAP_su2_dom"/>
</dbReference>
<dbReference type="InterPro" id="IPR037033">
    <property type="entry name" value="DNA-dir_RNAP_su2_hyb_sf"/>
</dbReference>
<dbReference type="InterPro" id="IPR010243">
    <property type="entry name" value="RNA_pol_bsu_bac"/>
</dbReference>
<dbReference type="InterPro" id="IPR007121">
    <property type="entry name" value="RNA_pol_bsu_CS"/>
</dbReference>
<dbReference type="InterPro" id="IPR007644">
    <property type="entry name" value="RNA_pol_bsu_protrusion"/>
</dbReference>
<dbReference type="InterPro" id="IPR007642">
    <property type="entry name" value="RNA_pol_Rpb2_2"/>
</dbReference>
<dbReference type="InterPro" id="IPR037034">
    <property type="entry name" value="RNA_pol_Rpb2_2_sf"/>
</dbReference>
<dbReference type="InterPro" id="IPR007645">
    <property type="entry name" value="RNA_pol_Rpb2_3"/>
</dbReference>
<dbReference type="InterPro" id="IPR007641">
    <property type="entry name" value="RNA_pol_Rpb2_7"/>
</dbReference>
<dbReference type="InterPro" id="IPR014724">
    <property type="entry name" value="RNA_pol_RPB2_OB-fold"/>
</dbReference>
<dbReference type="NCBIfam" id="NF001616">
    <property type="entry name" value="PRK00405.1"/>
    <property type="match status" value="1"/>
</dbReference>
<dbReference type="NCBIfam" id="TIGR02013">
    <property type="entry name" value="rpoB"/>
    <property type="match status" value="1"/>
</dbReference>
<dbReference type="PANTHER" id="PTHR20856">
    <property type="entry name" value="DNA-DIRECTED RNA POLYMERASE I SUBUNIT 2"/>
    <property type="match status" value="1"/>
</dbReference>
<dbReference type="Pfam" id="PF04563">
    <property type="entry name" value="RNA_pol_Rpb2_1"/>
    <property type="match status" value="1"/>
</dbReference>
<dbReference type="Pfam" id="PF04561">
    <property type="entry name" value="RNA_pol_Rpb2_2"/>
    <property type="match status" value="2"/>
</dbReference>
<dbReference type="Pfam" id="PF04565">
    <property type="entry name" value="RNA_pol_Rpb2_3"/>
    <property type="match status" value="1"/>
</dbReference>
<dbReference type="Pfam" id="PF10385">
    <property type="entry name" value="RNA_pol_Rpb2_45"/>
    <property type="match status" value="1"/>
</dbReference>
<dbReference type="Pfam" id="PF00562">
    <property type="entry name" value="RNA_pol_Rpb2_6"/>
    <property type="match status" value="1"/>
</dbReference>
<dbReference type="Pfam" id="PF04560">
    <property type="entry name" value="RNA_pol_Rpb2_7"/>
    <property type="match status" value="1"/>
</dbReference>
<dbReference type="SUPFAM" id="SSF64484">
    <property type="entry name" value="beta and beta-prime subunits of DNA dependent RNA-polymerase"/>
    <property type="match status" value="1"/>
</dbReference>
<dbReference type="PROSITE" id="PS01166">
    <property type="entry name" value="RNA_POL_BETA"/>
    <property type="match status" value="1"/>
</dbReference>
<reference key="1">
    <citation type="journal article" date="2005" name="Proc. Natl. Acad. Sci. U.S.A.">
        <title>Complete genome sequence of Vibrio fischeri: a symbiotic bacterium with pathogenic congeners.</title>
        <authorList>
            <person name="Ruby E.G."/>
            <person name="Urbanowski M."/>
            <person name="Campbell J."/>
            <person name="Dunn A."/>
            <person name="Faini M."/>
            <person name="Gunsalus R."/>
            <person name="Lostroh P."/>
            <person name="Lupp C."/>
            <person name="McCann J."/>
            <person name="Millikan D."/>
            <person name="Schaefer A."/>
            <person name="Stabb E."/>
            <person name="Stevens A."/>
            <person name="Visick K."/>
            <person name="Whistler C."/>
            <person name="Greenberg E.P."/>
        </authorList>
    </citation>
    <scope>NUCLEOTIDE SEQUENCE [LARGE SCALE GENOMIC DNA]</scope>
    <source>
        <strain>ATCC 700601 / ES114</strain>
    </source>
</reference>
<reference key="2">
    <citation type="journal article" date="2008" name="BMC Genomics">
        <title>Comparative genomics-based investigation of resequencing targets in Vibrio fischeri: focus on point miscalls and artefactual expansions.</title>
        <authorList>
            <person name="Mandel M.J."/>
            <person name="Stabb E.V."/>
            <person name="Ruby E.G."/>
        </authorList>
    </citation>
    <scope>SEQUENCE REVISION</scope>
</reference>
<proteinExistence type="inferred from homology"/>
<keyword id="KW-0240">DNA-directed RNA polymerase</keyword>
<keyword id="KW-0548">Nucleotidyltransferase</keyword>
<keyword id="KW-1185">Reference proteome</keyword>
<keyword id="KW-0804">Transcription</keyword>
<keyword id="KW-0808">Transferase</keyword>
<organism>
    <name type="scientific">Aliivibrio fischeri (strain ATCC 700601 / ES114)</name>
    <name type="common">Vibrio fischeri</name>
    <dbReference type="NCBI Taxonomy" id="312309"/>
    <lineage>
        <taxon>Bacteria</taxon>
        <taxon>Pseudomonadati</taxon>
        <taxon>Pseudomonadota</taxon>
        <taxon>Gammaproteobacteria</taxon>
        <taxon>Vibrionales</taxon>
        <taxon>Vibrionaceae</taxon>
        <taxon>Aliivibrio</taxon>
    </lineage>
</organism>
<feature type="chain" id="PRO_0000224119" description="DNA-directed RNA polymerase subunit beta">
    <location>
        <begin position="1"/>
        <end position="1342"/>
    </location>
</feature>
<protein>
    <recommendedName>
        <fullName evidence="1">DNA-directed RNA polymerase subunit beta</fullName>
        <shortName evidence="1">RNAP subunit beta</shortName>
        <ecNumber evidence="1">2.7.7.6</ecNumber>
    </recommendedName>
    <alternativeName>
        <fullName evidence="1">RNA polymerase subunit beta</fullName>
    </alternativeName>
    <alternativeName>
        <fullName evidence="1">Transcriptase subunit beta</fullName>
    </alternativeName>
</protein>
<name>RPOB_ALIF1</name>